<keyword id="KW-0997">Cell inner membrane</keyword>
<keyword id="KW-1003">Cell membrane</keyword>
<keyword id="KW-0472">Membrane</keyword>
<keyword id="KW-1185">Reference proteome</keyword>
<keyword id="KW-0812">Transmembrane</keyword>
<keyword id="KW-1133">Transmembrane helix</keyword>
<organism>
    <name type="scientific">Escherichia coli O1:K1 / APEC</name>
    <dbReference type="NCBI Taxonomy" id="405955"/>
    <lineage>
        <taxon>Bacteria</taxon>
        <taxon>Pseudomonadati</taxon>
        <taxon>Pseudomonadota</taxon>
        <taxon>Gammaproteobacteria</taxon>
        <taxon>Enterobacterales</taxon>
        <taxon>Enterobacteriaceae</taxon>
        <taxon>Escherichia</taxon>
    </lineage>
</organism>
<sequence>MKKFRWVALVVVVLACLLLWAQVFNMMCDQDVQFFSGICALNQFIPW</sequence>
<comment type="function">
    <text evidence="1">PhoP-regulated transcription is redox-sensitive, being activated when the periplasm becomes more reducing. MgrB acts between DsbA/DsbB and PhoP/PhoQ in this pathway. Represses PhoP/PhoQ signaling, possibly by binding to the periplasmic domain of PhoQ, altering its activity and that of downstream effector PhoP.</text>
</comment>
<comment type="subunit">
    <text evidence="1">May form homooligomers. Probably interacts with the periplasmic domain of PhoQ.</text>
</comment>
<comment type="subcellular location">
    <subcellularLocation>
        <location evidence="1">Cell inner membrane</location>
        <topology evidence="1">Single-pass membrane protein</topology>
    </subcellularLocation>
</comment>
<comment type="similarity">
    <text evidence="1">Belongs to the MgrB family.</text>
</comment>
<evidence type="ECO:0000255" key="1">
    <source>
        <dbReference type="HAMAP-Rule" id="MF_01596"/>
    </source>
</evidence>
<protein>
    <recommendedName>
        <fullName evidence="1">PhoP/PhoQ regulator MgrB</fullName>
    </recommendedName>
</protein>
<name>MGRB_ECOK1</name>
<proteinExistence type="inferred from homology"/>
<dbReference type="EMBL" id="CP000468">
    <property type="status" value="NOT_ANNOTATED_CDS"/>
    <property type="molecule type" value="Genomic_DNA"/>
</dbReference>
<dbReference type="RefSeq" id="WP_000714545.1">
    <property type="nucleotide sequence ID" value="NZ_CADILS010000034.1"/>
</dbReference>
<dbReference type="Proteomes" id="UP000008216">
    <property type="component" value="Chromosome"/>
</dbReference>
<dbReference type="GO" id="GO:0005886">
    <property type="term" value="C:plasma membrane"/>
    <property type="evidence" value="ECO:0007669"/>
    <property type="project" value="UniProtKB-SubCell"/>
</dbReference>
<dbReference type="GO" id="GO:0070298">
    <property type="term" value="P:negative regulation of phosphorelay signal transduction system"/>
    <property type="evidence" value="ECO:0007669"/>
    <property type="project" value="UniProtKB-UniRule"/>
</dbReference>
<dbReference type="HAMAP" id="MF_01596">
    <property type="entry name" value="MgrB"/>
    <property type="match status" value="1"/>
</dbReference>
<dbReference type="InterPro" id="IPR020907">
    <property type="entry name" value="MgrB"/>
</dbReference>
<dbReference type="NCBIfam" id="NF007635">
    <property type="entry name" value="PRK10299.1"/>
    <property type="match status" value="1"/>
</dbReference>
<dbReference type="Pfam" id="PF13998">
    <property type="entry name" value="MgrB"/>
    <property type="match status" value="1"/>
</dbReference>
<dbReference type="PROSITE" id="PS51257">
    <property type="entry name" value="PROKAR_LIPOPROTEIN"/>
    <property type="match status" value="1"/>
</dbReference>
<gene>
    <name evidence="1" type="primary">mgrB</name>
    <name type="ordered locus">Ecok1_16885</name>
</gene>
<accession>P0C7B2</accession>
<reference key="1">
    <citation type="journal article" date="2007" name="J. Bacteriol.">
        <title>The genome sequence of avian pathogenic Escherichia coli strain O1:K1:H7 shares strong similarities with human extraintestinal pathogenic E. coli genomes.</title>
        <authorList>
            <person name="Johnson T.J."/>
            <person name="Kariyawasam S."/>
            <person name="Wannemuehler Y."/>
            <person name="Mangiamele P."/>
            <person name="Johnson S.J."/>
            <person name="Doetkott C."/>
            <person name="Skyberg J.A."/>
            <person name="Lynne A.M."/>
            <person name="Johnson J.R."/>
            <person name="Nolan L.K."/>
        </authorList>
    </citation>
    <scope>NUCLEOTIDE SEQUENCE [LARGE SCALE GENOMIC DNA]</scope>
</reference>
<feature type="chain" id="PRO_0000330671" description="PhoP/PhoQ regulator MgrB">
    <location>
        <begin position="1"/>
        <end position="47"/>
    </location>
</feature>
<feature type="transmembrane region" description="Helical" evidence="1">
    <location>
        <begin position="6"/>
        <end position="26"/>
    </location>
</feature>